<comment type="catalytic activity">
    <reaction evidence="1">
        <text>urea + 2 H2O + H(+) = hydrogencarbonate + 2 NH4(+)</text>
        <dbReference type="Rhea" id="RHEA:20557"/>
        <dbReference type="ChEBI" id="CHEBI:15377"/>
        <dbReference type="ChEBI" id="CHEBI:15378"/>
        <dbReference type="ChEBI" id="CHEBI:16199"/>
        <dbReference type="ChEBI" id="CHEBI:17544"/>
        <dbReference type="ChEBI" id="CHEBI:28938"/>
        <dbReference type="EC" id="3.5.1.5"/>
    </reaction>
</comment>
<comment type="pathway">
    <text evidence="1">Nitrogen metabolism; urea degradation; CO(2) and NH(3) from urea (urease route): step 1/1.</text>
</comment>
<comment type="subunit">
    <text evidence="1">Heterotrimer of UreA (gamma), UreB (beta) and UreC (alpha) subunits. Three heterotrimers associate to form the active enzyme.</text>
</comment>
<comment type="subcellular location">
    <subcellularLocation>
        <location evidence="1">Cytoplasm</location>
    </subcellularLocation>
</comment>
<comment type="similarity">
    <text evidence="1">Belongs to the urease gamma subunit family.</text>
</comment>
<organism>
    <name type="scientific">Ureaplasma urealyticum</name>
    <name type="common">Ureaplasma urealyticum biotype 2</name>
    <dbReference type="NCBI Taxonomy" id="2130"/>
    <lineage>
        <taxon>Bacteria</taxon>
        <taxon>Bacillati</taxon>
        <taxon>Mycoplasmatota</taxon>
        <taxon>Mycoplasmoidales</taxon>
        <taxon>Mycoplasmoidaceae</taxon>
        <taxon>Ureaplasma</taxon>
    </lineage>
</organism>
<proteinExistence type="inferred from homology"/>
<keyword id="KW-0963">Cytoplasm</keyword>
<keyword id="KW-0378">Hydrolase</keyword>
<sequence length="101" mass="11129">MNLSLREIQKLLVTVAADVARRRLARGLKLNYSEAVALITDHVVEGARDGKLVADLMQSAREVLRVDQVMEGVDTMVGIIQVEVTFPDGTKLVSVHSPIYK</sequence>
<reference key="1">
    <citation type="journal article" date="1990" name="Mol. Microbiol.">
        <title>Ureaplasma urealyticum urease genes; use of a UGA tryptophan codon.</title>
        <authorList>
            <person name="Blanchard A."/>
        </authorList>
    </citation>
    <scope>NUCLEOTIDE SEQUENCE [GENOMIC DNA]</scope>
    <source>
        <strain>ATCC 27618 / CIP 103755 / NCTC 10177 / T960 / Serovar 8</strain>
    </source>
</reference>
<reference key="2">
    <citation type="journal article" date="1999" name="Int. J. Syst. Bacteriol.">
        <title>Phylogenetic analysis of Ureaplasma urealyticum -- support for the establishment of a new species, Ureaplasma parvum.</title>
        <authorList>
            <person name="Kong F."/>
            <person name="James G."/>
            <person name="Ma Z."/>
            <person name="Gordon S."/>
            <person name="Wang B."/>
            <person name="Gilbert G.L."/>
        </authorList>
    </citation>
    <scope>NUCLEOTIDE SEQUENCE [GENOMIC DNA]</scope>
    <source>
        <strain>ATCC 27618 / CIP 103755 / NCTC 10177 / T960 / Serovar 8</strain>
        <strain>ATCC 27814 / 23 / Serovar 2</strain>
        <strain>ATCC 27816 / 58 / Serovar 4</strain>
        <strain>ATCC 27817 / 354 / Serovar 5</strain>
        <strain>ATCC 27819 / Co / Serovar 7</strain>
        <strain>ATCC 33175 / Vancouver / Serovar 9</strain>
        <strain>ATCC 33695 / K2 / Serovar 11</strain>
        <strain>ATCC 33696 / U24 / Serovar 12</strain>
        <strain>ATCC 33698 / U38 / Serovar 13</strain>
    </source>
</reference>
<gene>
    <name evidence="1" type="primary">ureA</name>
</gene>
<accession>P0CB02</accession>
<accession>P17274</accession>
<accession>Q9R2R9</accession>
<feature type="chain" id="PRO_0000098057" description="Urease subunit gamma">
    <location>
        <begin position="1"/>
        <end position="101"/>
    </location>
</feature>
<feature type="sequence conflict" description="In Ref. 1; CAA35695." evidence="2" ref="1">
    <original>A</original>
    <variation>R</variation>
    <location>
        <position position="35"/>
    </location>
</feature>
<feature type="sequence conflict" description="In Ref. 1; CAA35695." evidence="2" ref="1">
    <original>S</original>
    <variation>D</variation>
    <location>
        <position position="97"/>
    </location>
</feature>
<protein>
    <recommendedName>
        <fullName evidence="1">Urease subunit gamma</fullName>
        <ecNumber evidence="1">3.5.1.5</ecNumber>
    </recommendedName>
    <alternativeName>
        <fullName evidence="1">Urea amidohydrolase subunit gamma</fullName>
    </alternativeName>
</protein>
<name>URE3_UREUR</name>
<dbReference type="EC" id="3.5.1.5" evidence="1"/>
<dbReference type="EMBL" id="X51315">
    <property type="protein sequence ID" value="CAA35695.1"/>
    <property type="molecule type" value="Genomic_DNA"/>
</dbReference>
<dbReference type="EMBL" id="AF085720">
    <property type="protein sequence ID" value="AAD28104.1"/>
    <property type="molecule type" value="Genomic_DNA"/>
</dbReference>
<dbReference type="EMBL" id="AF085721">
    <property type="protein sequence ID" value="AAD28107.1"/>
    <property type="molecule type" value="Genomic_DNA"/>
</dbReference>
<dbReference type="EMBL" id="AF085722">
    <property type="protein sequence ID" value="AAD28110.1"/>
    <property type="molecule type" value="Genomic_DNA"/>
</dbReference>
<dbReference type="EMBL" id="AF085723">
    <property type="protein sequence ID" value="AAD28113.1"/>
    <property type="molecule type" value="Genomic_DNA"/>
</dbReference>
<dbReference type="EMBL" id="AF085724">
    <property type="protein sequence ID" value="AAD28116.1"/>
    <property type="molecule type" value="Genomic_DNA"/>
</dbReference>
<dbReference type="EMBL" id="AF085725">
    <property type="protein sequence ID" value="AAD28119.1"/>
    <property type="molecule type" value="Genomic_DNA"/>
</dbReference>
<dbReference type="EMBL" id="AF085727">
    <property type="protein sequence ID" value="AAD28125.1"/>
    <property type="molecule type" value="Genomic_DNA"/>
</dbReference>
<dbReference type="EMBL" id="AF085728">
    <property type="protein sequence ID" value="AAD28128.1"/>
    <property type="molecule type" value="Genomic_DNA"/>
</dbReference>
<dbReference type="EMBL" id="AF085729">
    <property type="protein sequence ID" value="AAD28131.1"/>
    <property type="molecule type" value="Genomic_DNA"/>
</dbReference>
<dbReference type="PIR" id="S10030">
    <property type="entry name" value="S10030"/>
</dbReference>
<dbReference type="SMR" id="P0CB02"/>
<dbReference type="UniPathway" id="UPA00258">
    <property type="reaction ID" value="UER00370"/>
</dbReference>
<dbReference type="GO" id="GO:0005737">
    <property type="term" value="C:cytoplasm"/>
    <property type="evidence" value="ECO:0007669"/>
    <property type="project" value="UniProtKB-SubCell"/>
</dbReference>
<dbReference type="GO" id="GO:0016151">
    <property type="term" value="F:nickel cation binding"/>
    <property type="evidence" value="ECO:0007669"/>
    <property type="project" value="InterPro"/>
</dbReference>
<dbReference type="GO" id="GO:0009039">
    <property type="term" value="F:urease activity"/>
    <property type="evidence" value="ECO:0007669"/>
    <property type="project" value="UniProtKB-UniRule"/>
</dbReference>
<dbReference type="GO" id="GO:0043419">
    <property type="term" value="P:urea catabolic process"/>
    <property type="evidence" value="ECO:0007669"/>
    <property type="project" value="UniProtKB-UniRule"/>
</dbReference>
<dbReference type="CDD" id="cd00390">
    <property type="entry name" value="Urease_gamma"/>
    <property type="match status" value="1"/>
</dbReference>
<dbReference type="Gene3D" id="3.30.280.10">
    <property type="entry name" value="Urease, gamma-like subunit"/>
    <property type="match status" value="1"/>
</dbReference>
<dbReference type="HAMAP" id="MF_00739">
    <property type="entry name" value="Urease_gamma"/>
    <property type="match status" value="1"/>
</dbReference>
<dbReference type="InterPro" id="IPR012010">
    <property type="entry name" value="Urease_gamma"/>
</dbReference>
<dbReference type="InterPro" id="IPR002026">
    <property type="entry name" value="Urease_gamma/gamma-beta_su"/>
</dbReference>
<dbReference type="InterPro" id="IPR036463">
    <property type="entry name" value="Urease_gamma_sf"/>
</dbReference>
<dbReference type="InterPro" id="IPR050069">
    <property type="entry name" value="Urease_subunit"/>
</dbReference>
<dbReference type="NCBIfam" id="NF009712">
    <property type="entry name" value="PRK13241.1"/>
    <property type="match status" value="1"/>
</dbReference>
<dbReference type="NCBIfam" id="TIGR00193">
    <property type="entry name" value="urease_gam"/>
    <property type="match status" value="1"/>
</dbReference>
<dbReference type="PANTHER" id="PTHR33569">
    <property type="entry name" value="UREASE"/>
    <property type="match status" value="1"/>
</dbReference>
<dbReference type="PANTHER" id="PTHR33569:SF1">
    <property type="entry name" value="UREASE"/>
    <property type="match status" value="1"/>
</dbReference>
<dbReference type="Pfam" id="PF00547">
    <property type="entry name" value="Urease_gamma"/>
    <property type="match status" value="1"/>
</dbReference>
<dbReference type="PIRSF" id="PIRSF001223">
    <property type="entry name" value="Urease_gamma"/>
    <property type="match status" value="1"/>
</dbReference>
<dbReference type="SUPFAM" id="SSF54111">
    <property type="entry name" value="Urease, gamma-subunit"/>
    <property type="match status" value="1"/>
</dbReference>
<evidence type="ECO:0000255" key="1">
    <source>
        <dbReference type="HAMAP-Rule" id="MF_00739"/>
    </source>
</evidence>
<evidence type="ECO:0000305" key="2"/>